<protein>
    <recommendedName>
        <fullName evidence="1">ATP synthase subunit alpha</fullName>
        <ecNumber evidence="1">7.1.2.2</ecNumber>
    </recommendedName>
    <alternativeName>
        <fullName evidence="1">ATP synthase F1 sector subunit alpha</fullName>
    </alternativeName>
    <alternativeName>
        <fullName evidence="1">F-ATPase subunit alpha</fullName>
    </alternativeName>
</protein>
<evidence type="ECO:0000255" key="1">
    <source>
        <dbReference type="HAMAP-Rule" id="MF_01346"/>
    </source>
</evidence>
<dbReference type="EC" id="7.1.2.2" evidence="1"/>
<dbReference type="EMBL" id="AE009442">
    <property type="protein sequence ID" value="AAO28309.1"/>
    <property type="molecule type" value="Genomic_DNA"/>
</dbReference>
<dbReference type="RefSeq" id="WP_011097645.1">
    <property type="nucleotide sequence ID" value="NC_004556.1"/>
</dbReference>
<dbReference type="SMR" id="Q87E88"/>
<dbReference type="KEGG" id="xft:PD_0430"/>
<dbReference type="HOGENOM" id="CLU_010091_2_1_6"/>
<dbReference type="Proteomes" id="UP000002516">
    <property type="component" value="Chromosome"/>
</dbReference>
<dbReference type="GO" id="GO:0005886">
    <property type="term" value="C:plasma membrane"/>
    <property type="evidence" value="ECO:0007669"/>
    <property type="project" value="UniProtKB-SubCell"/>
</dbReference>
<dbReference type="GO" id="GO:0045259">
    <property type="term" value="C:proton-transporting ATP synthase complex"/>
    <property type="evidence" value="ECO:0007669"/>
    <property type="project" value="UniProtKB-KW"/>
</dbReference>
<dbReference type="GO" id="GO:0043531">
    <property type="term" value="F:ADP binding"/>
    <property type="evidence" value="ECO:0007669"/>
    <property type="project" value="TreeGrafter"/>
</dbReference>
<dbReference type="GO" id="GO:0005524">
    <property type="term" value="F:ATP binding"/>
    <property type="evidence" value="ECO:0007669"/>
    <property type="project" value="UniProtKB-UniRule"/>
</dbReference>
<dbReference type="GO" id="GO:0046933">
    <property type="term" value="F:proton-transporting ATP synthase activity, rotational mechanism"/>
    <property type="evidence" value="ECO:0007669"/>
    <property type="project" value="UniProtKB-UniRule"/>
</dbReference>
<dbReference type="CDD" id="cd18113">
    <property type="entry name" value="ATP-synt_F1_alpha_C"/>
    <property type="match status" value="1"/>
</dbReference>
<dbReference type="CDD" id="cd18116">
    <property type="entry name" value="ATP-synt_F1_alpha_N"/>
    <property type="match status" value="1"/>
</dbReference>
<dbReference type="CDD" id="cd01132">
    <property type="entry name" value="F1-ATPase_alpha_CD"/>
    <property type="match status" value="1"/>
</dbReference>
<dbReference type="FunFam" id="1.20.150.20:FF:000001">
    <property type="entry name" value="ATP synthase subunit alpha"/>
    <property type="match status" value="1"/>
</dbReference>
<dbReference type="FunFam" id="2.40.30.20:FF:000001">
    <property type="entry name" value="ATP synthase subunit alpha"/>
    <property type="match status" value="1"/>
</dbReference>
<dbReference type="FunFam" id="3.40.50.300:FF:000002">
    <property type="entry name" value="ATP synthase subunit alpha"/>
    <property type="match status" value="1"/>
</dbReference>
<dbReference type="Gene3D" id="2.40.30.20">
    <property type="match status" value="1"/>
</dbReference>
<dbReference type="Gene3D" id="1.20.150.20">
    <property type="entry name" value="ATP synthase alpha/beta chain, C-terminal domain"/>
    <property type="match status" value="1"/>
</dbReference>
<dbReference type="Gene3D" id="3.40.50.300">
    <property type="entry name" value="P-loop containing nucleotide triphosphate hydrolases"/>
    <property type="match status" value="1"/>
</dbReference>
<dbReference type="HAMAP" id="MF_01346">
    <property type="entry name" value="ATP_synth_alpha_bact"/>
    <property type="match status" value="1"/>
</dbReference>
<dbReference type="InterPro" id="IPR023366">
    <property type="entry name" value="ATP_synth_asu-like_sf"/>
</dbReference>
<dbReference type="InterPro" id="IPR000793">
    <property type="entry name" value="ATP_synth_asu_C"/>
</dbReference>
<dbReference type="InterPro" id="IPR038376">
    <property type="entry name" value="ATP_synth_asu_C_sf"/>
</dbReference>
<dbReference type="InterPro" id="IPR033732">
    <property type="entry name" value="ATP_synth_F1_a_nt-bd_dom"/>
</dbReference>
<dbReference type="InterPro" id="IPR005294">
    <property type="entry name" value="ATP_synth_F1_asu"/>
</dbReference>
<dbReference type="InterPro" id="IPR020003">
    <property type="entry name" value="ATPase_a/bsu_AS"/>
</dbReference>
<dbReference type="InterPro" id="IPR004100">
    <property type="entry name" value="ATPase_F1/V1/A1_a/bsu_N"/>
</dbReference>
<dbReference type="InterPro" id="IPR036121">
    <property type="entry name" value="ATPase_F1/V1/A1_a/bsu_N_sf"/>
</dbReference>
<dbReference type="InterPro" id="IPR000194">
    <property type="entry name" value="ATPase_F1/V1/A1_a/bsu_nucl-bd"/>
</dbReference>
<dbReference type="InterPro" id="IPR027417">
    <property type="entry name" value="P-loop_NTPase"/>
</dbReference>
<dbReference type="NCBIfam" id="TIGR00962">
    <property type="entry name" value="atpA"/>
    <property type="match status" value="1"/>
</dbReference>
<dbReference type="NCBIfam" id="NF009884">
    <property type="entry name" value="PRK13343.1"/>
    <property type="match status" value="1"/>
</dbReference>
<dbReference type="PANTHER" id="PTHR48082">
    <property type="entry name" value="ATP SYNTHASE SUBUNIT ALPHA, MITOCHONDRIAL"/>
    <property type="match status" value="1"/>
</dbReference>
<dbReference type="PANTHER" id="PTHR48082:SF2">
    <property type="entry name" value="ATP SYNTHASE SUBUNIT ALPHA, MITOCHONDRIAL"/>
    <property type="match status" value="1"/>
</dbReference>
<dbReference type="Pfam" id="PF00006">
    <property type="entry name" value="ATP-synt_ab"/>
    <property type="match status" value="1"/>
</dbReference>
<dbReference type="Pfam" id="PF00306">
    <property type="entry name" value="ATP-synt_ab_C"/>
    <property type="match status" value="1"/>
</dbReference>
<dbReference type="Pfam" id="PF02874">
    <property type="entry name" value="ATP-synt_ab_N"/>
    <property type="match status" value="1"/>
</dbReference>
<dbReference type="SUPFAM" id="SSF47917">
    <property type="entry name" value="C-terminal domain of alpha and beta subunits of F1 ATP synthase"/>
    <property type="match status" value="1"/>
</dbReference>
<dbReference type="SUPFAM" id="SSF50615">
    <property type="entry name" value="N-terminal domain of alpha and beta subunits of F1 ATP synthase"/>
    <property type="match status" value="1"/>
</dbReference>
<dbReference type="SUPFAM" id="SSF52540">
    <property type="entry name" value="P-loop containing nucleoside triphosphate hydrolases"/>
    <property type="match status" value="1"/>
</dbReference>
<dbReference type="PROSITE" id="PS00152">
    <property type="entry name" value="ATPASE_ALPHA_BETA"/>
    <property type="match status" value="1"/>
</dbReference>
<reference key="1">
    <citation type="journal article" date="2003" name="J. Bacteriol.">
        <title>Comparative analyses of the complete genome sequences of Pierce's disease and citrus variegated chlorosis strains of Xylella fastidiosa.</title>
        <authorList>
            <person name="Van Sluys M.A."/>
            <person name="de Oliveira M.C."/>
            <person name="Monteiro-Vitorello C.B."/>
            <person name="Miyaki C.Y."/>
            <person name="Furlan L.R."/>
            <person name="Camargo L.E.A."/>
            <person name="da Silva A.C.R."/>
            <person name="Moon D.H."/>
            <person name="Takita M.A."/>
            <person name="Lemos E.G.M."/>
            <person name="Machado M.A."/>
            <person name="Ferro M.I.T."/>
            <person name="da Silva F.R."/>
            <person name="Goldman M.H.S."/>
            <person name="Goldman G.H."/>
            <person name="Lemos M.V.F."/>
            <person name="El-Dorry H."/>
            <person name="Tsai S.M."/>
            <person name="Carrer H."/>
            <person name="Carraro D.M."/>
            <person name="de Oliveira R.C."/>
            <person name="Nunes L.R."/>
            <person name="Siqueira W.J."/>
            <person name="Coutinho L.L."/>
            <person name="Kimura E.T."/>
            <person name="Ferro E.S."/>
            <person name="Harakava R."/>
            <person name="Kuramae E.E."/>
            <person name="Marino C.L."/>
            <person name="Giglioti E."/>
            <person name="Abreu I.L."/>
            <person name="Alves L.M.C."/>
            <person name="do Amaral A.M."/>
            <person name="Baia G.S."/>
            <person name="Blanco S.R."/>
            <person name="Brito M.S."/>
            <person name="Cannavan F.S."/>
            <person name="Celestino A.V."/>
            <person name="da Cunha A.F."/>
            <person name="Fenille R.C."/>
            <person name="Ferro J.A."/>
            <person name="Formighieri E.F."/>
            <person name="Kishi L.T."/>
            <person name="Leoni S.G."/>
            <person name="Oliveira A.R."/>
            <person name="Rosa V.E. Jr."/>
            <person name="Sassaki F.T."/>
            <person name="Sena J.A.D."/>
            <person name="de Souza A.A."/>
            <person name="Truffi D."/>
            <person name="Tsukumo F."/>
            <person name="Yanai G.M."/>
            <person name="Zaros L.G."/>
            <person name="Civerolo E.L."/>
            <person name="Simpson A.J.G."/>
            <person name="Almeida N.F. Jr."/>
            <person name="Setubal J.C."/>
            <person name="Kitajima J.P."/>
        </authorList>
    </citation>
    <scope>NUCLEOTIDE SEQUENCE [LARGE SCALE GENOMIC DNA]</scope>
    <source>
        <strain>Temecula1 / ATCC 700964</strain>
    </source>
</reference>
<gene>
    <name evidence="1" type="primary">atpA</name>
    <name type="ordered locus">PD_0430</name>
</gene>
<proteinExistence type="inferred from homology"/>
<comment type="function">
    <text evidence="1">Produces ATP from ADP in the presence of a proton gradient across the membrane. The alpha chain is a regulatory subunit.</text>
</comment>
<comment type="catalytic activity">
    <reaction evidence="1">
        <text>ATP + H2O + 4 H(+)(in) = ADP + phosphate + 5 H(+)(out)</text>
        <dbReference type="Rhea" id="RHEA:57720"/>
        <dbReference type="ChEBI" id="CHEBI:15377"/>
        <dbReference type="ChEBI" id="CHEBI:15378"/>
        <dbReference type="ChEBI" id="CHEBI:30616"/>
        <dbReference type="ChEBI" id="CHEBI:43474"/>
        <dbReference type="ChEBI" id="CHEBI:456216"/>
        <dbReference type="EC" id="7.1.2.2"/>
    </reaction>
</comment>
<comment type="subunit">
    <text evidence="1">F-type ATPases have 2 components, CF(1) - the catalytic core - and CF(0) - the membrane proton channel. CF(1) has five subunits: alpha(3), beta(3), gamma(1), delta(1), epsilon(1). CF(0) has three main subunits: a(1), b(2) and c(9-12). The alpha and beta chains form an alternating ring which encloses part of the gamma chain. CF(1) is attached to CF(0) by a central stalk formed by the gamma and epsilon chains, while a peripheral stalk is formed by the delta and b chains.</text>
</comment>
<comment type="subcellular location">
    <subcellularLocation>
        <location evidence="1">Cell inner membrane</location>
        <topology evidence="1">Peripheral membrane protein</topology>
    </subcellularLocation>
</comment>
<comment type="similarity">
    <text evidence="1">Belongs to the ATPase alpha/beta chains family.</text>
</comment>
<accession>Q87E88</accession>
<keyword id="KW-0066">ATP synthesis</keyword>
<keyword id="KW-0067">ATP-binding</keyword>
<keyword id="KW-0997">Cell inner membrane</keyword>
<keyword id="KW-1003">Cell membrane</keyword>
<keyword id="KW-0139">CF(1)</keyword>
<keyword id="KW-0375">Hydrogen ion transport</keyword>
<keyword id="KW-0406">Ion transport</keyword>
<keyword id="KW-0472">Membrane</keyword>
<keyword id="KW-0547">Nucleotide-binding</keyword>
<keyword id="KW-1185">Reference proteome</keyword>
<keyword id="KW-1278">Translocase</keyword>
<keyword id="KW-0813">Transport</keyword>
<feature type="chain" id="PRO_0000238409" description="ATP synthase subunit alpha">
    <location>
        <begin position="1"/>
        <end position="515"/>
    </location>
</feature>
<feature type="binding site" evidence="1">
    <location>
        <begin position="171"/>
        <end position="178"/>
    </location>
    <ligand>
        <name>ATP</name>
        <dbReference type="ChEBI" id="CHEBI:30616"/>
    </ligand>
</feature>
<feature type="site" description="Required for activity" evidence="1">
    <location>
        <position position="375"/>
    </location>
</feature>
<organism>
    <name type="scientific">Xylella fastidiosa (strain Temecula1 / ATCC 700964)</name>
    <dbReference type="NCBI Taxonomy" id="183190"/>
    <lineage>
        <taxon>Bacteria</taxon>
        <taxon>Pseudomonadati</taxon>
        <taxon>Pseudomonadota</taxon>
        <taxon>Gammaproteobacteria</taxon>
        <taxon>Lysobacterales</taxon>
        <taxon>Lysobacteraceae</taxon>
        <taxon>Xylella</taxon>
    </lineage>
</organism>
<sequence>MATTLNPSEISELIKTRIEQVKLSAESRNEGTVTSVSDGIVRIFGLADAMQGEMIELPNKTYALALNLERDSVGAVVLGDYEHLREGDVAKTTGRILEVPVGKSLLGRVVNALGEPIDGKGTLGPTQTAPVERVAPGVIWRKSVDQPVQTGYKSVDAMIPIGRGQRELIIGDRQTGKTAMAIDTVISQKHTGIKCVYVAIGQKSSTIANIVRKLEENDALDHTIVVAATASESAALQYISAYAGCTMGEYFMDRGEDALIIYDDLSKQAVAYRQISLLLKRPPGREAYPGDVFYLHSRLLERAARVSEEYVEKFTQGEVKGKTGSLTALPIIETQAGDVSAFVPTNVISITDGQIFLETDLFNAGIRPAVNAGISVSRVGGSAQTKIIKKLSGGIRISLAQYRELAAFAQFASDLDETTRKQLERGQRVTELMKQKQYTSMSVANQALSIYAVSEGYLDDIPVHKVLTFEEGLHAHFSNTQGALIDKINNSGDWDNNIEAAFKQHIEEFKTTGSW</sequence>
<name>ATPA_XYLFT</name>